<proteinExistence type="inferred from homology"/>
<keyword id="KW-0963">Cytoplasm</keyword>
<keyword id="KW-0489">Methyltransferase</keyword>
<keyword id="KW-0698">rRNA processing</keyword>
<keyword id="KW-0949">S-adenosyl-L-methionine</keyword>
<keyword id="KW-0808">Transferase</keyword>
<organism>
    <name type="scientific">Shewanella sp. (strain ANA-3)</name>
    <dbReference type="NCBI Taxonomy" id="94122"/>
    <lineage>
        <taxon>Bacteria</taxon>
        <taxon>Pseudomonadati</taxon>
        <taxon>Pseudomonadota</taxon>
        <taxon>Gammaproteobacteria</taxon>
        <taxon>Alteromonadales</taxon>
        <taxon>Shewanellaceae</taxon>
        <taxon>Shewanella</taxon>
    </lineage>
</organism>
<comment type="function">
    <text evidence="1">Specifically methylates the adenine in position 1618 of 23S rRNA.</text>
</comment>
<comment type="catalytic activity">
    <reaction evidence="1">
        <text>adenosine(1618) in 23S rRNA + S-adenosyl-L-methionine = N(6)-methyladenosine(1618) in 23S rRNA + S-adenosyl-L-homocysteine + H(+)</text>
        <dbReference type="Rhea" id="RHEA:16497"/>
        <dbReference type="Rhea" id="RHEA-COMP:10229"/>
        <dbReference type="Rhea" id="RHEA-COMP:10231"/>
        <dbReference type="ChEBI" id="CHEBI:15378"/>
        <dbReference type="ChEBI" id="CHEBI:57856"/>
        <dbReference type="ChEBI" id="CHEBI:59789"/>
        <dbReference type="ChEBI" id="CHEBI:74411"/>
        <dbReference type="ChEBI" id="CHEBI:74449"/>
        <dbReference type="EC" id="2.1.1.181"/>
    </reaction>
</comment>
<comment type="subcellular location">
    <subcellularLocation>
        <location evidence="1">Cytoplasm</location>
    </subcellularLocation>
</comment>
<comment type="similarity">
    <text evidence="1">Belongs to the methyltransferase superfamily. METTL16/RlmF family.</text>
</comment>
<evidence type="ECO:0000255" key="1">
    <source>
        <dbReference type="HAMAP-Rule" id="MF_01848"/>
    </source>
</evidence>
<evidence type="ECO:0000256" key="2">
    <source>
        <dbReference type="SAM" id="MobiDB-lite"/>
    </source>
</evidence>
<feature type="chain" id="PRO_0000349962" description="Ribosomal RNA large subunit methyltransferase F">
    <location>
        <begin position="1"/>
        <end position="364"/>
    </location>
</feature>
<feature type="region of interest" description="Disordered" evidence="2">
    <location>
        <begin position="1"/>
        <end position="52"/>
    </location>
</feature>
<feature type="compositionally biased region" description="Polar residues" evidence="2">
    <location>
        <begin position="25"/>
        <end position="38"/>
    </location>
</feature>
<protein>
    <recommendedName>
        <fullName evidence="1">Ribosomal RNA large subunit methyltransferase F</fullName>
        <ecNumber evidence="1">2.1.1.181</ecNumber>
    </recommendedName>
    <alternativeName>
        <fullName evidence="1">23S rRNA mA1618 methyltransferase</fullName>
    </alternativeName>
    <alternativeName>
        <fullName evidence="1">rRNA adenine N-6-methyltransferase</fullName>
    </alternativeName>
</protein>
<sequence>MPKPAIKTAAKLAMSSAGKRGKPSTPKSLAKPQTTKPKTASKLKAKHGEQKRLHPRNLHINGYDFPALMASFPKLKAFVRPTPYGALSIDFADPFAVKNLNAALLKHHYGLAFWDIPKGALCPPIPGRVDYLHYLADLLFEGAKVKRAAAIHALDIGTGANGVYAILGHQVYDWQFVASDINPQSLINVQRIIDNNPSLQGHLSLRRQQDDKAVFKGIIQASDRFELTLCNPPFHGSLKEASEGSLRKVRNLQLNRGEQPKATSATLNFGGQAAELWCQGGEKQFLATMIRESQAFAEQCLWFTSLVSKQENLKPCYQALEKLGVDTVKTIEMQQGNKVTRVLAWSFHSQAKRLQWRNQVISGA</sequence>
<dbReference type="EC" id="2.1.1.181" evidence="1"/>
<dbReference type="EMBL" id="CP000469">
    <property type="protein sequence ID" value="ABK46371.1"/>
    <property type="molecule type" value="Genomic_DNA"/>
</dbReference>
<dbReference type="RefSeq" id="WP_011715400.1">
    <property type="nucleotide sequence ID" value="NC_008577.1"/>
</dbReference>
<dbReference type="SMR" id="A0KRF2"/>
<dbReference type="STRING" id="94122.Shewana3_0127"/>
<dbReference type="KEGG" id="shn:Shewana3_0127"/>
<dbReference type="eggNOG" id="COG3129">
    <property type="taxonomic scope" value="Bacteria"/>
</dbReference>
<dbReference type="HOGENOM" id="CLU_027534_3_0_6"/>
<dbReference type="OrthoDB" id="1115728at2"/>
<dbReference type="Proteomes" id="UP000002589">
    <property type="component" value="Chromosome"/>
</dbReference>
<dbReference type="GO" id="GO:0005737">
    <property type="term" value="C:cytoplasm"/>
    <property type="evidence" value="ECO:0007669"/>
    <property type="project" value="UniProtKB-SubCell"/>
</dbReference>
<dbReference type="GO" id="GO:0052907">
    <property type="term" value="F:23S rRNA (adenine(1618)-N(6))-methyltransferase activity"/>
    <property type="evidence" value="ECO:0007669"/>
    <property type="project" value="UniProtKB-EC"/>
</dbReference>
<dbReference type="GO" id="GO:0070475">
    <property type="term" value="P:rRNA base methylation"/>
    <property type="evidence" value="ECO:0007669"/>
    <property type="project" value="TreeGrafter"/>
</dbReference>
<dbReference type="Gene3D" id="3.40.50.150">
    <property type="entry name" value="Vaccinia Virus protein VP39"/>
    <property type="match status" value="1"/>
</dbReference>
<dbReference type="HAMAP" id="MF_01848">
    <property type="entry name" value="23SrRNA_methyltr_F"/>
    <property type="match status" value="1"/>
</dbReference>
<dbReference type="InterPro" id="IPR010286">
    <property type="entry name" value="METTL16/RlmF"/>
</dbReference>
<dbReference type="InterPro" id="IPR016909">
    <property type="entry name" value="rRNA_lsu_MeTfrase_F"/>
</dbReference>
<dbReference type="InterPro" id="IPR029063">
    <property type="entry name" value="SAM-dependent_MTases_sf"/>
</dbReference>
<dbReference type="NCBIfam" id="NF008725">
    <property type="entry name" value="PRK11727.1"/>
    <property type="match status" value="1"/>
</dbReference>
<dbReference type="PANTHER" id="PTHR13393:SF0">
    <property type="entry name" value="RNA N6-ADENOSINE-METHYLTRANSFERASE METTL16"/>
    <property type="match status" value="1"/>
</dbReference>
<dbReference type="PANTHER" id="PTHR13393">
    <property type="entry name" value="SAM-DEPENDENT METHYLTRANSFERASE"/>
    <property type="match status" value="1"/>
</dbReference>
<dbReference type="Pfam" id="PF05971">
    <property type="entry name" value="Methyltransf_10"/>
    <property type="match status" value="1"/>
</dbReference>
<dbReference type="PIRSF" id="PIRSF029038">
    <property type="entry name" value="Mtase_YbiN_prd"/>
    <property type="match status" value="1"/>
</dbReference>
<dbReference type="SUPFAM" id="SSF53335">
    <property type="entry name" value="S-adenosyl-L-methionine-dependent methyltransferases"/>
    <property type="match status" value="1"/>
</dbReference>
<gene>
    <name evidence="1" type="primary">rlmF</name>
    <name type="ordered locus">Shewana3_0127</name>
</gene>
<name>RLMF_SHESA</name>
<reference key="1">
    <citation type="submission" date="2006-09" db="EMBL/GenBank/DDBJ databases">
        <title>Complete sequence of chromosome 1 of Shewanella sp. ANA-3.</title>
        <authorList>
            <person name="Copeland A."/>
            <person name="Lucas S."/>
            <person name="Lapidus A."/>
            <person name="Barry K."/>
            <person name="Detter J.C."/>
            <person name="Glavina del Rio T."/>
            <person name="Hammon N."/>
            <person name="Israni S."/>
            <person name="Dalin E."/>
            <person name="Tice H."/>
            <person name="Pitluck S."/>
            <person name="Chertkov O."/>
            <person name="Brettin T."/>
            <person name="Bruce D."/>
            <person name="Han C."/>
            <person name="Tapia R."/>
            <person name="Gilna P."/>
            <person name="Schmutz J."/>
            <person name="Larimer F."/>
            <person name="Land M."/>
            <person name="Hauser L."/>
            <person name="Kyrpides N."/>
            <person name="Kim E."/>
            <person name="Newman D."/>
            <person name="Salticov C."/>
            <person name="Konstantinidis K."/>
            <person name="Klappenback J."/>
            <person name="Tiedje J."/>
            <person name="Richardson P."/>
        </authorList>
    </citation>
    <scope>NUCLEOTIDE SEQUENCE [LARGE SCALE GENOMIC DNA]</scope>
    <source>
        <strain>ANA-3</strain>
    </source>
</reference>
<accession>A0KRF2</accession>